<dbReference type="EMBL" id="CP000924">
    <property type="protein sequence ID" value="ABY94059.1"/>
    <property type="molecule type" value="Genomic_DNA"/>
</dbReference>
<dbReference type="RefSeq" id="WP_012268641.1">
    <property type="nucleotide sequence ID" value="NC_010321.1"/>
</dbReference>
<dbReference type="SMR" id="B0KCL6"/>
<dbReference type="STRING" id="340099.Teth39_0390"/>
<dbReference type="KEGG" id="tpd:Teth39_0390"/>
<dbReference type="eggNOG" id="COG0256">
    <property type="taxonomic scope" value="Bacteria"/>
</dbReference>
<dbReference type="HOGENOM" id="CLU_098841_0_1_9"/>
<dbReference type="Proteomes" id="UP000002156">
    <property type="component" value="Chromosome"/>
</dbReference>
<dbReference type="GO" id="GO:0022625">
    <property type="term" value="C:cytosolic large ribosomal subunit"/>
    <property type="evidence" value="ECO:0007669"/>
    <property type="project" value="TreeGrafter"/>
</dbReference>
<dbReference type="GO" id="GO:0008097">
    <property type="term" value="F:5S rRNA binding"/>
    <property type="evidence" value="ECO:0007669"/>
    <property type="project" value="TreeGrafter"/>
</dbReference>
<dbReference type="GO" id="GO:0003735">
    <property type="term" value="F:structural constituent of ribosome"/>
    <property type="evidence" value="ECO:0007669"/>
    <property type="project" value="InterPro"/>
</dbReference>
<dbReference type="GO" id="GO:0006412">
    <property type="term" value="P:translation"/>
    <property type="evidence" value="ECO:0007669"/>
    <property type="project" value="UniProtKB-UniRule"/>
</dbReference>
<dbReference type="CDD" id="cd00432">
    <property type="entry name" value="Ribosomal_L18_L5e"/>
    <property type="match status" value="1"/>
</dbReference>
<dbReference type="FunFam" id="3.30.420.100:FF:000001">
    <property type="entry name" value="50S ribosomal protein L18"/>
    <property type="match status" value="1"/>
</dbReference>
<dbReference type="Gene3D" id="3.30.420.100">
    <property type="match status" value="1"/>
</dbReference>
<dbReference type="HAMAP" id="MF_01337_B">
    <property type="entry name" value="Ribosomal_uL18_B"/>
    <property type="match status" value="1"/>
</dbReference>
<dbReference type="InterPro" id="IPR004389">
    <property type="entry name" value="Ribosomal_uL18_bac-type"/>
</dbReference>
<dbReference type="InterPro" id="IPR005484">
    <property type="entry name" value="Ribosomal_uL18_bac/euk"/>
</dbReference>
<dbReference type="NCBIfam" id="TIGR00060">
    <property type="entry name" value="L18_bact"/>
    <property type="match status" value="1"/>
</dbReference>
<dbReference type="PANTHER" id="PTHR12899">
    <property type="entry name" value="39S RIBOSOMAL PROTEIN L18, MITOCHONDRIAL"/>
    <property type="match status" value="1"/>
</dbReference>
<dbReference type="PANTHER" id="PTHR12899:SF3">
    <property type="entry name" value="LARGE RIBOSOMAL SUBUNIT PROTEIN UL18M"/>
    <property type="match status" value="1"/>
</dbReference>
<dbReference type="Pfam" id="PF00861">
    <property type="entry name" value="Ribosomal_L18p"/>
    <property type="match status" value="1"/>
</dbReference>
<dbReference type="SUPFAM" id="SSF53137">
    <property type="entry name" value="Translational machinery components"/>
    <property type="match status" value="1"/>
</dbReference>
<name>RL18_THEP3</name>
<comment type="function">
    <text evidence="1">This is one of the proteins that bind and probably mediate the attachment of the 5S RNA into the large ribosomal subunit, where it forms part of the central protuberance.</text>
</comment>
<comment type="subunit">
    <text evidence="1">Part of the 50S ribosomal subunit; part of the 5S rRNA/L5/L18/L25 subcomplex. Contacts the 5S and 23S rRNAs.</text>
</comment>
<comment type="similarity">
    <text evidence="1">Belongs to the universal ribosomal protein uL18 family.</text>
</comment>
<feature type="chain" id="PRO_1000142731" description="Large ribosomal subunit protein uL18">
    <location>
        <begin position="1"/>
        <end position="121"/>
    </location>
</feature>
<evidence type="ECO:0000255" key="1">
    <source>
        <dbReference type="HAMAP-Rule" id="MF_01337"/>
    </source>
</evidence>
<evidence type="ECO:0000305" key="2"/>
<organism>
    <name type="scientific">Thermoanaerobacter pseudethanolicus (strain ATCC 33223 / 39E)</name>
    <name type="common">Clostridium thermohydrosulfuricum</name>
    <dbReference type="NCBI Taxonomy" id="340099"/>
    <lineage>
        <taxon>Bacteria</taxon>
        <taxon>Bacillati</taxon>
        <taxon>Bacillota</taxon>
        <taxon>Clostridia</taxon>
        <taxon>Thermoanaerobacterales</taxon>
        <taxon>Thermoanaerobacteraceae</taxon>
        <taxon>Thermoanaerobacter</taxon>
    </lineage>
</organism>
<reference key="1">
    <citation type="submission" date="2008-01" db="EMBL/GenBank/DDBJ databases">
        <title>Complete sequence of Thermoanaerobacter pseudethanolicus 39E.</title>
        <authorList>
            <person name="Copeland A."/>
            <person name="Lucas S."/>
            <person name="Lapidus A."/>
            <person name="Barry K."/>
            <person name="Glavina del Rio T."/>
            <person name="Dalin E."/>
            <person name="Tice H."/>
            <person name="Pitluck S."/>
            <person name="Bruce D."/>
            <person name="Goodwin L."/>
            <person name="Saunders E."/>
            <person name="Brettin T."/>
            <person name="Detter J.C."/>
            <person name="Han C."/>
            <person name="Schmutz J."/>
            <person name="Larimer F."/>
            <person name="Land M."/>
            <person name="Hauser L."/>
            <person name="Kyrpides N."/>
            <person name="Lykidis A."/>
            <person name="Hemme C."/>
            <person name="Fields M.W."/>
            <person name="He Z."/>
            <person name="Zhou J."/>
            <person name="Richardson P."/>
        </authorList>
    </citation>
    <scope>NUCLEOTIDE SEQUENCE [LARGE SCALE GENOMIC DNA]</scope>
    <source>
        <strain>ATCC 33223 / DSM 2355 / 39E</strain>
    </source>
</reference>
<sequence>MITKPNRNELRKRRHLRVRKKVFGTPERPRLNVFRSLKHIYAQIIDDTKGHTLVHASTLDPELRGIAKGANKQSAKLVGELIAKRALEKGIKDVVFDRGGYIYHGVVKELADAARQAGLNF</sequence>
<protein>
    <recommendedName>
        <fullName evidence="1">Large ribosomal subunit protein uL18</fullName>
    </recommendedName>
    <alternativeName>
        <fullName evidence="2">50S ribosomal protein L18</fullName>
    </alternativeName>
</protein>
<keyword id="KW-1185">Reference proteome</keyword>
<keyword id="KW-0687">Ribonucleoprotein</keyword>
<keyword id="KW-0689">Ribosomal protein</keyword>
<keyword id="KW-0694">RNA-binding</keyword>
<keyword id="KW-0699">rRNA-binding</keyword>
<proteinExistence type="inferred from homology"/>
<gene>
    <name evidence="1" type="primary">rplR</name>
    <name type="ordered locus">Teth39_0390</name>
</gene>
<accession>B0KCL6</accession>